<gene>
    <name type="primary">TADA3</name>
    <name type="synonym">ADA3</name>
    <name type="synonym">TADA3L</name>
</gene>
<comment type="function">
    <text evidence="4 7">Functions as a component of the PCAF complex. The PCAF complex is capable of efficiently acetylating histones in a nucleosomal context. The PCAF complex could be considered as the human version of the yeast SAGA complex. Also known as a coactivator for p53/TP53-dependent transcriptional activation. Component of the ATAC complex, a complex with histone acetyltransferase activity on histones H3 and H4.</text>
</comment>
<comment type="subunit">
    <text evidence="3 4 5 6 7 8">The PCAF complex is composed of a number of TBP-associated factors (TAFS), such as TAF5, TAF5L, TAF6, TAF6L, TAF9, TAF10 and TAF12, PCAF, and also PCAF-associated factors (PAFs), such as TADA2L/ADA2, TADA3L/ADA3 and SPT3. Interacts directly with TADA2L and PCAF and also with the high-risk HPV oncoprotein E6. Component of the STAGA transcription coactivator-HAT complex, at least composed of SUPT3H, GCN5L2, TAF5L, TAF6L, SUPT7L, TADA3L, TAD1L, TAF10, TAF12, TRRAP and TAF9. Component of the TFTC-HAT complex. Component of the ADA2A-containing complex (ATAC), composed of KAT14, KAT2A, TADA2L, TADA3L, ZZ3, MBIP, WDR5, YEATS2, CCDC101 and DR1.</text>
</comment>
<comment type="interaction">
    <interactant intactId="EBI-473249">
        <id>O75528</id>
    </interactant>
    <interactant intactId="EBI-372428">
        <id>Q9NY61</id>
        <label>AATF</label>
    </interactant>
    <organismsDiffer>false</organismsDiffer>
    <experiments>2</experiments>
</comment>
<comment type="interaction">
    <interactant intactId="EBI-473249">
        <id>O75528</id>
    </interactant>
    <interactant intactId="EBI-12170453">
        <id>Q8N2N9-4</id>
        <label>ANKRD36B</label>
    </interactant>
    <organismsDiffer>false</organismsDiffer>
    <experiments>3</experiments>
</comment>
<comment type="interaction">
    <interactant intactId="EBI-473249">
        <id>O75528</id>
    </interactant>
    <interactant intactId="EBI-395261">
        <id>P24863</id>
        <label>CCNC</label>
    </interactant>
    <organismsDiffer>false</organismsDiffer>
    <experiments>3</experiments>
</comment>
<comment type="interaction">
    <interactant intactId="EBI-473249">
        <id>O75528</id>
    </interactant>
    <interactant intactId="EBI-25837549">
        <id>P28329-3</id>
        <label>CHAT</label>
    </interactant>
    <organismsDiffer>false</organismsDiffer>
    <experiments>3</experiments>
</comment>
<comment type="interaction">
    <interactant intactId="EBI-473249">
        <id>O75528</id>
    </interactant>
    <interactant intactId="EBI-5460660">
        <id>Q96MH2</id>
        <label>HEXIM2</label>
    </interactant>
    <organismsDiffer>false</organismsDiffer>
    <experiments>3</experiments>
</comment>
<comment type="interaction">
    <interactant intactId="EBI-473249">
        <id>O75528</id>
    </interactant>
    <interactant intactId="EBI-350145">
        <id>P01112</id>
        <label>HRAS</label>
    </interactant>
    <organismsDiffer>false</organismsDiffer>
    <experiments>3</experiments>
</comment>
<comment type="interaction">
    <interactant intactId="EBI-473249">
        <id>O75528</id>
    </interactant>
    <interactant intactId="EBI-6398041">
        <id>Q9UMF0</id>
        <label>ICAM5</label>
    </interactant>
    <organismsDiffer>false</organismsDiffer>
    <experiments>3</experiments>
</comment>
<comment type="interaction">
    <interactant intactId="EBI-473249">
        <id>O75528</id>
    </interactant>
    <interactant intactId="EBI-948266">
        <id>O14901</id>
        <label>KLF11</label>
    </interactant>
    <organismsDiffer>false</organismsDiffer>
    <experiments>3</experiments>
</comment>
<comment type="interaction">
    <interactant intactId="EBI-473249">
        <id>O75528</id>
    </interactant>
    <interactant intactId="EBI-2811583">
        <id>Q9BVL2</id>
        <label>NUP58</label>
    </interactant>
    <organismsDiffer>false</organismsDiffer>
    <experiments>3</experiments>
</comment>
<comment type="interaction">
    <interactant intactId="EBI-473249">
        <id>O75528</id>
    </interactant>
    <interactant intactId="EBI-473160">
        <id>Q8N2W9</id>
        <label>PIAS4</label>
    </interactant>
    <organismsDiffer>false</organismsDiffer>
    <experiments>3</experiments>
</comment>
<comment type="interaction">
    <interactant intactId="EBI-473249">
        <id>O75528</id>
    </interactant>
    <interactant intactId="EBI-16429492">
        <id>P28702-3</id>
        <label>RXRB</label>
    </interactant>
    <organismsDiffer>false</organismsDiffer>
    <experiments>3</experiments>
</comment>
<comment type="interaction">
    <interactant intactId="EBI-473249">
        <id>O75528</id>
    </interactant>
    <interactant intactId="EBI-743117">
        <id>Q96ES7</id>
        <label>SGF29</label>
    </interactant>
    <organismsDiffer>false</organismsDiffer>
    <experiments>15</experiments>
</comment>
<comment type="interaction">
    <interactant intactId="EBI-473249">
        <id>O75528</id>
    </interactant>
    <interactant intactId="EBI-5235340">
        <id>Q7Z699</id>
        <label>SPRED1</label>
    </interactant>
    <organismsDiffer>false</organismsDiffer>
    <experiments>3</experiments>
</comment>
<comment type="interaction">
    <interactant intactId="EBI-473249">
        <id>O75528</id>
    </interactant>
    <interactant intactId="EBI-714135">
        <id>O75558</id>
        <label>STX11</label>
    </interactant>
    <organismsDiffer>false</organismsDiffer>
    <experiments>3</experiments>
</comment>
<comment type="interaction">
    <interactant intactId="EBI-473249">
        <id>O75528</id>
    </interactant>
    <interactant intactId="EBI-742268">
        <id>O75478</id>
        <label>TADA2A</label>
    </interactant>
    <organismsDiffer>false</organismsDiffer>
    <experiments>4</experiments>
</comment>
<comment type="interaction">
    <interactant intactId="EBI-473249">
        <id>O75528</id>
    </interactant>
    <interactant intactId="EBI-6116822">
        <id>Q8N3L3</id>
        <label>TXLNB</label>
    </interactant>
    <organismsDiffer>false</organismsDiffer>
    <experiments>3</experiments>
</comment>
<comment type="interaction">
    <interactant intactId="EBI-473249">
        <id>O75528</id>
    </interactant>
    <interactant intactId="EBI-741277">
        <id>P45974</id>
        <label>USP5</label>
    </interactant>
    <organismsDiffer>false</organismsDiffer>
    <experiments>2</experiments>
</comment>
<comment type="interaction">
    <interactant intactId="EBI-473249">
        <id>O75528</id>
    </interactant>
    <interactant intactId="EBI-16518538">
        <id>Q8BWQ5</id>
        <label>Dclk3</label>
    </interactant>
    <organismsDiffer>true</organismsDiffer>
    <experiments>2</experiments>
</comment>
<comment type="subcellular location">
    <subcellularLocation>
        <location evidence="3 8">Nucleus</location>
    </subcellularLocation>
</comment>
<comment type="alternative products">
    <event type="alternative splicing"/>
    <isoform>
        <id>O75528-1</id>
        <name>1</name>
        <sequence type="displayed"/>
    </isoform>
    <isoform>
        <id>O75528-2</id>
        <name>2</name>
        <sequence type="described" ref="VSP_009739"/>
    </isoform>
</comment>
<comment type="tissue specificity">
    <text>Ubiquitously expressed.</text>
</comment>
<comment type="similarity">
    <text evidence="12">Belongs to the NGG1 family.</text>
</comment>
<sequence>MSELKDCPLQFHDFKSVDHLKVCPRYTAVLARSEDDGIGIEELDTLQLELETLLSSASRRLRVLEAETQILTDWQDKKGDRRFLKLGRDHELGAPPKHGKPKKQKLEGKAGHGPGPGPGRPKSKNLQPKIQEYEFTDDPIDVPRIPKNDAPNRFWASVEPYCADITSEEVRTLEELLKPPEDEAEHYKIPPLGKHYSQRWAQEDLLEEQKDGARAAAVADKKKGLMGPLTELDTKDVDALLKKSEAQHEQPEDGCPFGALTQRLLQALVEENIISPMEDSPIPDMSGKESGADGASTSPRNQNKPFSVPHTKSLESRIKEELIAQGLLESEDRPAEDSEDEVLAELRKRQAELKALSAHNRTKKHDLLRLAKEEVSRQELRQRVRMADNEVMDAFRKIMAARQKKRTPTKKEKDQAWKTLKERESILKLLDG</sequence>
<organism>
    <name type="scientific">Homo sapiens</name>
    <name type="common">Human</name>
    <dbReference type="NCBI Taxonomy" id="9606"/>
    <lineage>
        <taxon>Eukaryota</taxon>
        <taxon>Metazoa</taxon>
        <taxon>Chordata</taxon>
        <taxon>Craniata</taxon>
        <taxon>Vertebrata</taxon>
        <taxon>Euteleostomi</taxon>
        <taxon>Mammalia</taxon>
        <taxon>Eutheria</taxon>
        <taxon>Euarchontoglires</taxon>
        <taxon>Primates</taxon>
        <taxon>Haplorrhini</taxon>
        <taxon>Catarrhini</taxon>
        <taxon>Hominidae</taxon>
        <taxon>Homo</taxon>
    </lineage>
</organism>
<feature type="chain" id="PRO_0000072416" description="Transcriptional adapter 3">
    <location>
        <begin position="1"/>
        <end position="432"/>
    </location>
</feature>
<feature type="region of interest" description="Disordered" evidence="2">
    <location>
        <begin position="87"/>
        <end position="126"/>
    </location>
</feature>
<feature type="region of interest" description="Disordered" evidence="2">
    <location>
        <begin position="272"/>
        <end position="319"/>
    </location>
</feature>
<feature type="coiled-coil region" evidence="1">
    <location>
        <begin position="40"/>
        <end position="69"/>
    </location>
</feature>
<feature type="coiled-coil region" evidence="1">
    <location>
        <begin position="367"/>
        <end position="407"/>
    </location>
</feature>
<feature type="compositionally biased region" description="Polar residues" evidence="2">
    <location>
        <begin position="295"/>
        <end position="305"/>
    </location>
</feature>
<feature type="modified residue" description="Phosphoserine" evidence="14">
    <location>
        <position position="280"/>
    </location>
</feature>
<feature type="modified residue" description="Phosphoserine" evidence="14">
    <location>
        <position position="298"/>
    </location>
</feature>
<feature type="modified residue" description="N6-acetyllysine" evidence="13">
    <location>
        <position position="418"/>
    </location>
</feature>
<feature type="cross-link" description="Glycyl lysine isopeptide (Lys-Gly) (interchain with G-Cter in SUMO2)" evidence="15">
    <location>
        <position position="21"/>
    </location>
</feature>
<feature type="cross-link" description="Glycyl lysine isopeptide (Lys-Gly) (interchain with G-Cter in SUMO2)" evidence="15">
    <location>
        <position position="129"/>
    </location>
</feature>
<feature type="splice variant" id="VSP_009739" description="In isoform 2." evidence="9 10 11">
    <location>
        <begin position="370"/>
        <end position="432"/>
    </location>
</feature>
<feature type="sequence conflict" description="In Ref. 3; AK000228." evidence="12" ref="3">
    <original>E</original>
    <variation>G</variation>
    <location>
        <position position="168"/>
    </location>
</feature>
<evidence type="ECO:0000255" key="1"/>
<evidence type="ECO:0000256" key="2">
    <source>
        <dbReference type="SAM" id="MobiDB-lite"/>
    </source>
</evidence>
<evidence type="ECO:0000269" key="3">
    <source>
    </source>
</evidence>
<evidence type="ECO:0000269" key="4">
    <source>
    </source>
</evidence>
<evidence type="ECO:0000269" key="5">
    <source>
    </source>
</evidence>
<evidence type="ECO:0000269" key="6">
    <source>
    </source>
</evidence>
<evidence type="ECO:0000269" key="7">
    <source>
    </source>
</evidence>
<evidence type="ECO:0000269" key="8">
    <source>
    </source>
</evidence>
<evidence type="ECO:0000303" key="9">
    <source>
    </source>
</evidence>
<evidence type="ECO:0000303" key="10">
    <source>
    </source>
</evidence>
<evidence type="ECO:0000303" key="11">
    <source ref="4"/>
</evidence>
<evidence type="ECO:0000305" key="12"/>
<evidence type="ECO:0007744" key="13">
    <source>
    </source>
</evidence>
<evidence type="ECO:0007744" key="14">
    <source>
    </source>
</evidence>
<evidence type="ECO:0007744" key="15">
    <source>
    </source>
</evidence>
<proteinExistence type="evidence at protein level"/>
<name>TADA3_HUMAN</name>
<keyword id="KW-0007">Acetylation</keyword>
<keyword id="KW-0025">Alternative splicing</keyword>
<keyword id="KW-0175">Coiled coil</keyword>
<keyword id="KW-1017">Isopeptide bond</keyword>
<keyword id="KW-0539">Nucleus</keyword>
<keyword id="KW-0597">Phosphoprotein</keyword>
<keyword id="KW-1267">Proteomics identification</keyword>
<keyword id="KW-1185">Reference proteome</keyword>
<keyword id="KW-0804">Transcription</keyword>
<keyword id="KW-0805">Transcription regulation</keyword>
<keyword id="KW-0832">Ubl conjugation</keyword>
<protein>
    <recommendedName>
        <fullName>Transcriptional adapter 3</fullName>
    </recommendedName>
    <alternativeName>
        <fullName>ADA3 homolog</fullName>
        <shortName>hADA3</shortName>
    </alternativeName>
    <alternativeName>
        <fullName>STAF54</fullName>
    </alternativeName>
    <alternativeName>
        <fullName>Transcriptional adapter 3-like</fullName>
        <shortName>ADA3-like protein</shortName>
    </alternativeName>
</protein>
<accession>O75528</accession>
<accession>Q6FI83</accession>
<accession>Q9UFS2</accession>
<reference key="1">
    <citation type="journal article" date="1998" name="Cell">
        <title>Histone-like TAFs within the PCAF histone acetylase complex.</title>
        <authorList>
            <person name="Ogryzko V.V."/>
            <person name="Kotani T."/>
            <person name="Zhang X."/>
            <person name="Schiltz R.L."/>
            <person name="Howard T."/>
            <person name="Yang X.-J."/>
            <person name="Howard B.H."/>
            <person name="Qin J."/>
            <person name="Nakatani Y."/>
        </authorList>
    </citation>
    <scope>NUCLEOTIDE SEQUENCE [MRNA] (ISOFORM 1)</scope>
    <scope>SUBCELLULAR LOCATION</scope>
    <scope>INTERACTION WITH PCAF; TAF5L; TAF6L; TAF9; TAF10 AND TAF12</scope>
</reference>
<reference key="2">
    <citation type="journal article" date="2001" name="Genome Res.">
        <title>Towards a catalog of human genes and proteins: sequencing and analysis of 500 novel complete protein coding human cDNAs.</title>
        <authorList>
            <person name="Wiemann S."/>
            <person name="Weil B."/>
            <person name="Wellenreuther R."/>
            <person name="Gassenhuber J."/>
            <person name="Glassl S."/>
            <person name="Ansorge W."/>
            <person name="Boecher M."/>
            <person name="Bloecker H."/>
            <person name="Bauersachs S."/>
            <person name="Blum H."/>
            <person name="Lauber J."/>
            <person name="Duesterhoeft A."/>
            <person name="Beyer A."/>
            <person name="Koehrer K."/>
            <person name="Strack N."/>
            <person name="Mewes H.-W."/>
            <person name="Ottenwaelder B."/>
            <person name="Obermaier B."/>
            <person name="Tampe J."/>
            <person name="Heubner D."/>
            <person name="Wambutt R."/>
            <person name="Korn B."/>
            <person name="Klein M."/>
            <person name="Poustka A."/>
        </authorList>
    </citation>
    <scope>NUCLEOTIDE SEQUENCE [LARGE SCALE MRNA] (ISOFORM 2)</scope>
    <source>
        <tissue>Testis</tissue>
    </source>
</reference>
<reference key="3">
    <citation type="journal article" date="2004" name="Nat. Genet.">
        <title>Complete sequencing and characterization of 21,243 full-length human cDNAs.</title>
        <authorList>
            <person name="Ota T."/>
            <person name="Suzuki Y."/>
            <person name="Nishikawa T."/>
            <person name="Otsuki T."/>
            <person name="Sugiyama T."/>
            <person name="Irie R."/>
            <person name="Wakamatsu A."/>
            <person name="Hayashi K."/>
            <person name="Sato H."/>
            <person name="Nagai K."/>
            <person name="Kimura K."/>
            <person name="Makita H."/>
            <person name="Sekine M."/>
            <person name="Obayashi M."/>
            <person name="Nishi T."/>
            <person name="Shibahara T."/>
            <person name="Tanaka T."/>
            <person name="Ishii S."/>
            <person name="Yamamoto J."/>
            <person name="Saito K."/>
            <person name="Kawai Y."/>
            <person name="Isono Y."/>
            <person name="Nakamura Y."/>
            <person name="Nagahari K."/>
            <person name="Murakami K."/>
            <person name="Yasuda T."/>
            <person name="Iwayanagi T."/>
            <person name="Wagatsuma M."/>
            <person name="Shiratori A."/>
            <person name="Sudo H."/>
            <person name="Hosoiri T."/>
            <person name="Kaku Y."/>
            <person name="Kodaira H."/>
            <person name="Kondo H."/>
            <person name="Sugawara M."/>
            <person name="Takahashi M."/>
            <person name="Kanda K."/>
            <person name="Yokoi T."/>
            <person name="Furuya T."/>
            <person name="Kikkawa E."/>
            <person name="Omura Y."/>
            <person name="Abe K."/>
            <person name="Kamihara K."/>
            <person name="Katsuta N."/>
            <person name="Sato K."/>
            <person name="Tanikawa M."/>
            <person name="Yamazaki M."/>
            <person name="Ninomiya K."/>
            <person name="Ishibashi T."/>
            <person name="Yamashita H."/>
            <person name="Murakawa K."/>
            <person name="Fujimori K."/>
            <person name="Tanai H."/>
            <person name="Kimata M."/>
            <person name="Watanabe M."/>
            <person name="Hiraoka S."/>
            <person name="Chiba Y."/>
            <person name="Ishida S."/>
            <person name="Ono Y."/>
            <person name="Takiguchi S."/>
            <person name="Watanabe S."/>
            <person name="Yosida M."/>
            <person name="Hotuta T."/>
            <person name="Kusano J."/>
            <person name="Kanehori K."/>
            <person name="Takahashi-Fujii A."/>
            <person name="Hara H."/>
            <person name="Tanase T.-O."/>
            <person name="Nomura Y."/>
            <person name="Togiya S."/>
            <person name="Komai F."/>
            <person name="Hara R."/>
            <person name="Takeuchi K."/>
            <person name="Arita M."/>
            <person name="Imose N."/>
            <person name="Musashino K."/>
            <person name="Yuuki H."/>
            <person name="Oshima A."/>
            <person name="Sasaki N."/>
            <person name="Aotsuka S."/>
            <person name="Yoshikawa Y."/>
            <person name="Matsunawa H."/>
            <person name="Ichihara T."/>
            <person name="Shiohata N."/>
            <person name="Sano S."/>
            <person name="Moriya S."/>
            <person name="Momiyama H."/>
            <person name="Satoh N."/>
            <person name="Takami S."/>
            <person name="Terashima Y."/>
            <person name="Suzuki O."/>
            <person name="Nakagawa S."/>
            <person name="Senoh A."/>
            <person name="Mizoguchi H."/>
            <person name="Goto Y."/>
            <person name="Shimizu F."/>
            <person name="Wakebe H."/>
            <person name="Hishigaki H."/>
            <person name="Watanabe T."/>
            <person name="Sugiyama A."/>
            <person name="Takemoto M."/>
            <person name="Kawakami B."/>
            <person name="Yamazaki M."/>
            <person name="Watanabe K."/>
            <person name="Kumagai A."/>
            <person name="Itakura S."/>
            <person name="Fukuzumi Y."/>
            <person name="Fujimori Y."/>
            <person name="Komiyama M."/>
            <person name="Tashiro H."/>
            <person name="Tanigami A."/>
            <person name="Fujiwara T."/>
            <person name="Ono T."/>
            <person name="Yamada K."/>
            <person name="Fujii Y."/>
            <person name="Ozaki K."/>
            <person name="Hirao M."/>
            <person name="Ohmori Y."/>
            <person name="Kawabata A."/>
            <person name="Hikiji T."/>
            <person name="Kobatake N."/>
            <person name="Inagaki H."/>
            <person name="Ikema Y."/>
            <person name="Okamoto S."/>
            <person name="Okitani R."/>
            <person name="Kawakami T."/>
            <person name="Noguchi S."/>
            <person name="Itoh T."/>
            <person name="Shigeta K."/>
            <person name="Senba T."/>
            <person name="Matsumura K."/>
            <person name="Nakajima Y."/>
            <person name="Mizuno T."/>
            <person name="Morinaga M."/>
            <person name="Sasaki M."/>
            <person name="Togashi T."/>
            <person name="Oyama M."/>
            <person name="Hata H."/>
            <person name="Watanabe M."/>
            <person name="Komatsu T."/>
            <person name="Mizushima-Sugano J."/>
            <person name="Satoh T."/>
            <person name="Shirai Y."/>
            <person name="Takahashi Y."/>
            <person name="Nakagawa K."/>
            <person name="Okumura K."/>
            <person name="Nagase T."/>
            <person name="Nomura N."/>
            <person name="Kikuchi H."/>
            <person name="Masuho Y."/>
            <person name="Yamashita R."/>
            <person name="Nakai K."/>
            <person name="Yada T."/>
            <person name="Nakamura Y."/>
            <person name="Ohara O."/>
            <person name="Isogai T."/>
            <person name="Sugano S."/>
        </authorList>
    </citation>
    <scope>NUCLEOTIDE SEQUENCE [LARGE SCALE MRNA] (ISOFORM 1)</scope>
    <source>
        <tissue>Colon mucosa</tissue>
    </source>
</reference>
<reference key="4">
    <citation type="submission" date="2004-06" db="EMBL/GenBank/DDBJ databases">
        <title>Cloning of human full open reading frames in Gateway(TM) system entry vector (pDONR201).</title>
        <authorList>
            <person name="Ebert L."/>
            <person name="Schick M."/>
            <person name="Neubert P."/>
            <person name="Schatten R."/>
            <person name="Henze S."/>
            <person name="Korn B."/>
        </authorList>
    </citation>
    <scope>NUCLEOTIDE SEQUENCE [LARGE SCALE MRNA] (ISOFORM 2)</scope>
</reference>
<reference key="5">
    <citation type="submission" date="2005-07" db="EMBL/GenBank/DDBJ databases">
        <authorList>
            <person name="Mural R.J."/>
            <person name="Istrail S."/>
            <person name="Sutton G.G."/>
            <person name="Florea L."/>
            <person name="Halpern A.L."/>
            <person name="Mobarry C.M."/>
            <person name="Lippert R."/>
            <person name="Walenz B."/>
            <person name="Shatkay H."/>
            <person name="Dew I."/>
            <person name="Miller J.R."/>
            <person name="Flanigan M.J."/>
            <person name="Edwards N.J."/>
            <person name="Bolanos R."/>
            <person name="Fasulo D."/>
            <person name="Halldorsson B.V."/>
            <person name="Hannenhalli S."/>
            <person name="Turner R."/>
            <person name="Yooseph S."/>
            <person name="Lu F."/>
            <person name="Nusskern D.R."/>
            <person name="Shue B.C."/>
            <person name="Zheng X.H."/>
            <person name="Zhong F."/>
            <person name="Delcher A.L."/>
            <person name="Huson D.H."/>
            <person name="Kravitz S.A."/>
            <person name="Mouchard L."/>
            <person name="Reinert K."/>
            <person name="Remington K.A."/>
            <person name="Clark A.G."/>
            <person name="Waterman M.S."/>
            <person name="Eichler E.E."/>
            <person name="Adams M.D."/>
            <person name="Hunkapiller M.W."/>
            <person name="Myers E.W."/>
            <person name="Venter J.C."/>
        </authorList>
    </citation>
    <scope>NUCLEOTIDE SEQUENCE [LARGE SCALE GENOMIC DNA]</scope>
</reference>
<reference key="6">
    <citation type="journal article" date="2004" name="Genome Res.">
        <title>The status, quality, and expansion of the NIH full-length cDNA project: the Mammalian Gene Collection (MGC).</title>
        <authorList>
            <consortium name="The MGC Project Team"/>
        </authorList>
    </citation>
    <scope>NUCLEOTIDE SEQUENCE [LARGE SCALE MRNA] (ISOFORMS 1 AND 2)</scope>
    <source>
        <tissue>Muscle</tissue>
        <tissue>Pancreas</tissue>
    </source>
</reference>
<reference key="7">
    <citation type="journal article" date="2001" name="Mol. Cell. Biol.">
        <title>Human STAGA complex is a chromatin-acetylating transcription coactivator that interacts with pre-mRNA splicing and DNA damage-binding factors in vivo.</title>
        <authorList>
            <person name="Martinez E."/>
            <person name="Palhan V.B."/>
            <person name="Tjernberg A."/>
            <person name="Lymar E.S."/>
            <person name="Gamper A.M."/>
            <person name="Kundu T.K."/>
            <person name="Chait B.T."/>
            <person name="Roeder R.G."/>
        </authorList>
    </citation>
    <scope>IDENTIFICATION IN THE STAGA COMPLEX</scope>
    <scope>SUBCELLULAR LOCATION</scope>
    <scope>IDENTIFICATION BY MASS SPECTROMETRY</scope>
</reference>
<reference key="8">
    <citation type="journal article" date="2002" name="Mol. Cell. Biol.">
        <title>Human papillomavirus oncoprotein E6 inactivates the transcriptional coactivator human ADA3.</title>
        <authorList>
            <person name="Kumar A."/>
            <person name="Zhao Y."/>
            <person name="Meng G."/>
            <person name="Zeng M."/>
            <person name="Srinivasan S."/>
            <person name="Delmolino L.M."/>
            <person name="Gao Q."/>
            <person name="Dimri G."/>
            <person name="Weber G.F."/>
            <person name="Wazer D.E."/>
            <person name="Band H."/>
            <person name="Band V."/>
        </authorList>
    </citation>
    <scope>INTERACTION WITH TP53 AND THE HIGH-RISK HPV ONCOPROTEIN E6</scope>
</reference>
<reference key="9">
    <citation type="journal article" date="2001" name="EMBO J.">
        <title>hADA3 is required for p53 activity.</title>
        <authorList>
            <person name="Wang T."/>
            <person name="Kobayashi T."/>
            <person name="Takimoto R."/>
            <person name="Denes A.E."/>
            <person name="Snyder E.L."/>
            <person name="el-Deiry W.S."/>
            <person name="Brachmann R.K."/>
        </authorList>
    </citation>
    <scope>FUNCTION</scope>
    <scope>INTERACTION WITH TP53</scope>
</reference>
<reference key="10">
    <citation type="journal article" date="1998" name="Cell">
        <title>The TAFs in the HAT.</title>
        <authorList>
            <person name="Struhl K."/>
            <person name="Moqtaderi Z."/>
        </authorList>
    </citation>
    <scope>REVIEW</scope>
    <scope>PCAF COMPLEX COMPOSITION</scope>
</reference>
<reference key="11">
    <citation type="journal article" date="2003" name="Proteomics">
        <title>Novel subunits of the TATA binding protein free TAFII-containing transcription complex identified by matrix-assisted laser desorption/ionization-time of flight mass spectrometry following one-dimensional gel electrophoresis.</title>
        <authorList>
            <person name="Cavusoglu N."/>
            <person name="Brand M."/>
            <person name="Tora L."/>
            <person name="van Dorsselaer A."/>
        </authorList>
    </citation>
    <scope>IDENTIFICATION IN THE TFTC-HAT COMPLEX</scope>
</reference>
<reference key="12">
    <citation type="journal article" date="2009" name="Mol. Cell. Biol.">
        <title>The double-histone-acetyltransferase complex ATAC is essential for mammalian development.</title>
        <authorList>
            <person name="Guelman S."/>
            <person name="Kozuka K."/>
            <person name="Mao Y."/>
            <person name="Pham V."/>
            <person name="Solloway M.J."/>
            <person name="Wang J."/>
            <person name="Wu J."/>
            <person name="Lill J.R."/>
            <person name="Zha J."/>
        </authorList>
    </citation>
    <scope>FUNCTION</scope>
    <scope>IDENTIFICATION IN ATAC COMPLEX</scope>
</reference>
<reference key="13">
    <citation type="journal article" date="2009" name="Science">
        <title>Lysine acetylation targets protein complexes and co-regulates major cellular functions.</title>
        <authorList>
            <person name="Choudhary C."/>
            <person name="Kumar C."/>
            <person name="Gnad F."/>
            <person name="Nielsen M.L."/>
            <person name="Rehman M."/>
            <person name="Walther T.C."/>
            <person name="Olsen J.V."/>
            <person name="Mann M."/>
        </authorList>
    </citation>
    <scope>ACETYLATION [LARGE SCALE ANALYSIS] AT LYS-418</scope>
    <scope>IDENTIFICATION BY MASS SPECTROMETRY [LARGE SCALE ANALYSIS]</scope>
</reference>
<reference key="14">
    <citation type="journal article" date="2010" name="Sci. Signal.">
        <title>Quantitative phosphoproteomics reveals widespread full phosphorylation site occupancy during mitosis.</title>
        <authorList>
            <person name="Olsen J.V."/>
            <person name="Vermeulen M."/>
            <person name="Santamaria A."/>
            <person name="Kumar C."/>
            <person name="Miller M.L."/>
            <person name="Jensen L.J."/>
            <person name="Gnad F."/>
            <person name="Cox J."/>
            <person name="Jensen T.S."/>
            <person name="Nigg E.A."/>
            <person name="Brunak S."/>
            <person name="Mann M."/>
        </authorList>
    </citation>
    <scope>IDENTIFICATION BY MASS SPECTROMETRY [LARGE SCALE ANALYSIS]</scope>
    <source>
        <tissue>Cervix carcinoma</tissue>
    </source>
</reference>
<reference key="15">
    <citation type="journal article" date="2014" name="J. Proteomics">
        <title>An enzyme assisted RP-RPLC approach for in-depth analysis of human liver phosphoproteome.</title>
        <authorList>
            <person name="Bian Y."/>
            <person name="Song C."/>
            <person name="Cheng K."/>
            <person name="Dong M."/>
            <person name="Wang F."/>
            <person name="Huang J."/>
            <person name="Sun D."/>
            <person name="Wang L."/>
            <person name="Ye M."/>
            <person name="Zou H."/>
        </authorList>
    </citation>
    <scope>PHOSPHORYLATION [LARGE SCALE ANALYSIS] AT SER-280 AND SER-298</scope>
    <scope>IDENTIFICATION BY MASS SPECTROMETRY [LARGE SCALE ANALYSIS]</scope>
    <source>
        <tissue>Liver</tissue>
    </source>
</reference>
<reference key="16">
    <citation type="journal article" date="2017" name="Nat. Struct. Mol. Biol.">
        <title>Site-specific mapping of the human SUMO proteome reveals co-modification with phosphorylation.</title>
        <authorList>
            <person name="Hendriks I.A."/>
            <person name="Lyon D."/>
            <person name="Young C."/>
            <person name="Jensen L.J."/>
            <person name="Vertegaal A.C."/>
            <person name="Nielsen M.L."/>
        </authorList>
    </citation>
    <scope>SUMOYLATION [LARGE SCALE ANALYSIS] AT LYS-21 AND LYS-129</scope>
    <scope>IDENTIFICATION BY MASS SPECTROMETRY [LARGE SCALE ANALYSIS]</scope>
</reference>
<dbReference type="EMBL" id="AF069733">
    <property type="protein sequence ID" value="AAC39903.1"/>
    <property type="molecule type" value="mRNA"/>
</dbReference>
<dbReference type="EMBL" id="AL117487">
    <property type="protein sequence ID" value="CAB55957.1"/>
    <property type="molecule type" value="mRNA"/>
</dbReference>
<dbReference type="EMBL" id="AK000228">
    <property type="status" value="NOT_ANNOTATED_CDS"/>
    <property type="molecule type" value="mRNA"/>
</dbReference>
<dbReference type="EMBL" id="CR533543">
    <property type="protein sequence ID" value="CAG38574.1"/>
    <property type="molecule type" value="mRNA"/>
</dbReference>
<dbReference type="EMBL" id="CH471055">
    <property type="protein sequence ID" value="EAW63994.1"/>
    <property type="molecule type" value="Genomic_DNA"/>
</dbReference>
<dbReference type="EMBL" id="BC009240">
    <property type="protein sequence ID" value="AAH09240.1"/>
    <property type="molecule type" value="mRNA"/>
</dbReference>
<dbReference type="EMBL" id="BC013433">
    <property type="protein sequence ID" value="AAH13433.1"/>
    <property type="molecule type" value="mRNA"/>
</dbReference>
<dbReference type="CCDS" id="CCDS2583.1">
    <molecule id="O75528-1"/>
</dbReference>
<dbReference type="CCDS" id="CCDS2584.1">
    <molecule id="O75528-2"/>
</dbReference>
<dbReference type="PIR" id="T17267">
    <property type="entry name" value="T17267"/>
</dbReference>
<dbReference type="RefSeq" id="NP_001265199.1">
    <molecule id="O75528-1"/>
    <property type="nucleotide sequence ID" value="NM_001278270.2"/>
</dbReference>
<dbReference type="RefSeq" id="NP_006345.1">
    <molecule id="O75528-1"/>
    <property type="nucleotide sequence ID" value="NM_006354.5"/>
</dbReference>
<dbReference type="RefSeq" id="NP_597814.1">
    <molecule id="O75528-2"/>
    <property type="nucleotide sequence ID" value="NM_133480.4"/>
</dbReference>
<dbReference type="SMR" id="O75528"/>
<dbReference type="BioGRID" id="115737">
    <property type="interactions" value="145"/>
</dbReference>
<dbReference type="ComplexPortal" id="CPX-1004">
    <property type="entry name" value="PCAF-containing ATAC complex"/>
</dbReference>
<dbReference type="ComplexPortal" id="CPX-6802">
    <property type="entry name" value="SAGA complex, KAT2B variant"/>
</dbReference>
<dbReference type="ComplexPortal" id="CPX-900">
    <property type="entry name" value="SAGA complex, KAT2A variant"/>
</dbReference>
<dbReference type="ComplexPortal" id="CPX-903">
    <property type="entry name" value="TFTC histone acetylation complex"/>
</dbReference>
<dbReference type="ComplexPortal" id="CPX-989">
    <property type="entry name" value="PCAF histone acetylase complex"/>
</dbReference>
<dbReference type="ComplexPortal" id="CPX-997">
    <property type="entry name" value="GCN5-containing ATAC complex"/>
</dbReference>
<dbReference type="CORUM" id="O75528"/>
<dbReference type="FunCoup" id="O75528">
    <property type="interactions" value="3111"/>
</dbReference>
<dbReference type="IntAct" id="O75528">
    <property type="interactions" value="106"/>
</dbReference>
<dbReference type="MINT" id="O75528"/>
<dbReference type="STRING" id="9606.ENSP00000307684"/>
<dbReference type="GlyGen" id="O75528">
    <property type="glycosylation" value="1 site, 1 O-linked glycan (1 site)"/>
</dbReference>
<dbReference type="iPTMnet" id="O75528"/>
<dbReference type="PhosphoSitePlus" id="O75528"/>
<dbReference type="BioMuta" id="TADA3"/>
<dbReference type="jPOST" id="O75528"/>
<dbReference type="MassIVE" id="O75528"/>
<dbReference type="PaxDb" id="9606-ENSP00000307684"/>
<dbReference type="PeptideAtlas" id="O75528"/>
<dbReference type="ProteomicsDB" id="50064">
    <molecule id="O75528-1"/>
</dbReference>
<dbReference type="ProteomicsDB" id="50065">
    <molecule id="O75528-2"/>
</dbReference>
<dbReference type="Pumba" id="O75528"/>
<dbReference type="Antibodypedia" id="10290">
    <property type="antibodies" value="247 antibodies from 28 providers"/>
</dbReference>
<dbReference type="DNASU" id="10474"/>
<dbReference type="Ensembl" id="ENST00000301964.7">
    <molecule id="O75528-1"/>
    <property type="protein sequence ID" value="ENSP00000307684.2"/>
    <property type="gene ID" value="ENSG00000171148.14"/>
</dbReference>
<dbReference type="Ensembl" id="ENST00000343450.2">
    <molecule id="O75528-2"/>
    <property type="protein sequence ID" value="ENSP00000343649.2"/>
    <property type="gene ID" value="ENSG00000171148.14"/>
</dbReference>
<dbReference type="Ensembl" id="ENST00000440161.5">
    <molecule id="O75528-1"/>
    <property type="protein sequence ID" value="ENSP00000393471.1"/>
    <property type="gene ID" value="ENSG00000171148.14"/>
</dbReference>
<dbReference type="GeneID" id="10474"/>
<dbReference type="KEGG" id="hsa:10474"/>
<dbReference type="MANE-Select" id="ENST00000301964.7">
    <property type="protein sequence ID" value="ENSP00000307684.2"/>
    <property type="RefSeq nucleotide sequence ID" value="NM_006354.5"/>
    <property type="RefSeq protein sequence ID" value="NP_006345.1"/>
</dbReference>
<dbReference type="UCSC" id="uc003bsx.3">
    <molecule id="O75528-1"/>
    <property type="organism name" value="human"/>
</dbReference>
<dbReference type="AGR" id="HGNC:19422"/>
<dbReference type="CTD" id="10474"/>
<dbReference type="DisGeNET" id="10474"/>
<dbReference type="GeneCards" id="TADA3"/>
<dbReference type="HGNC" id="HGNC:19422">
    <property type="gene designation" value="TADA3"/>
</dbReference>
<dbReference type="HPA" id="ENSG00000171148">
    <property type="expression patterns" value="Low tissue specificity"/>
</dbReference>
<dbReference type="MIM" id="602945">
    <property type="type" value="gene"/>
</dbReference>
<dbReference type="neXtProt" id="NX_O75528"/>
<dbReference type="OpenTargets" id="ENSG00000171148"/>
<dbReference type="PharmGKB" id="PA165698494"/>
<dbReference type="VEuPathDB" id="HostDB:ENSG00000171148"/>
<dbReference type="eggNOG" id="KOG4191">
    <property type="taxonomic scope" value="Eukaryota"/>
</dbReference>
<dbReference type="GeneTree" id="ENSGT00390000008947"/>
<dbReference type="HOGENOM" id="CLU_038515_0_0_1"/>
<dbReference type="InParanoid" id="O75528"/>
<dbReference type="OMA" id="TPNKFWA"/>
<dbReference type="OrthoDB" id="1232at2759"/>
<dbReference type="PAN-GO" id="O75528">
    <property type="GO annotations" value="3 GO annotations based on evolutionary models"/>
</dbReference>
<dbReference type="PhylomeDB" id="O75528"/>
<dbReference type="TreeFam" id="TF323397"/>
<dbReference type="PathwayCommons" id="O75528"/>
<dbReference type="Reactome" id="R-HSA-3214847">
    <property type="pathway name" value="HATs acetylate histones"/>
</dbReference>
<dbReference type="Reactome" id="R-HSA-5689880">
    <property type="pathway name" value="Ub-specific processing proteases"/>
</dbReference>
<dbReference type="Reactome" id="R-HSA-9772755">
    <property type="pathway name" value="Formation of WDR5-containing histone-modifying complexes"/>
</dbReference>
<dbReference type="SignaLink" id="O75528"/>
<dbReference type="SIGNOR" id="O75528"/>
<dbReference type="BioGRID-ORCS" id="10474">
    <property type="hits" value="351 hits in 1183 CRISPR screens"/>
</dbReference>
<dbReference type="ChiTaRS" id="TADA3">
    <property type="organism name" value="human"/>
</dbReference>
<dbReference type="GeneWiki" id="TADA3L"/>
<dbReference type="GenomeRNAi" id="10474"/>
<dbReference type="Pharos" id="O75528">
    <property type="development level" value="Tbio"/>
</dbReference>
<dbReference type="PRO" id="PR:O75528"/>
<dbReference type="Proteomes" id="UP000005640">
    <property type="component" value="Chromosome 3"/>
</dbReference>
<dbReference type="RNAct" id="O75528">
    <property type="molecule type" value="protein"/>
</dbReference>
<dbReference type="Bgee" id="ENSG00000171148">
    <property type="expression patterns" value="Expressed in right adrenal gland and 202 other cell types or tissues"/>
</dbReference>
<dbReference type="ExpressionAtlas" id="O75528">
    <property type="expression patterns" value="baseline and differential"/>
</dbReference>
<dbReference type="GO" id="GO:0140672">
    <property type="term" value="C:ATAC complex"/>
    <property type="evidence" value="ECO:0000314"/>
    <property type="project" value="BHF-UCL"/>
</dbReference>
<dbReference type="GO" id="GO:0072686">
    <property type="term" value="C:mitotic spindle"/>
    <property type="evidence" value="ECO:0000303"/>
    <property type="project" value="ComplexPortal"/>
</dbReference>
<dbReference type="GO" id="GO:0005654">
    <property type="term" value="C:nucleoplasm"/>
    <property type="evidence" value="ECO:0000314"/>
    <property type="project" value="HPA"/>
</dbReference>
<dbReference type="GO" id="GO:0005634">
    <property type="term" value="C:nucleus"/>
    <property type="evidence" value="ECO:0000314"/>
    <property type="project" value="UniProtKB"/>
</dbReference>
<dbReference type="GO" id="GO:0000124">
    <property type="term" value="C:SAGA complex"/>
    <property type="evidence" value="ECO:0000314"/>
    <property type="project" value="UniProtKB"/>
</dbReference>
<dbReference type="GO" id="GO:0033276">
    <property type="term" value="C:transcription factor TFTC complex"/>
    <property type="evidence" value="ECO:0000314"/>
    <property type="project" value="UniProtKB"/>
</dbReference>
<dbReference type="GO" id="GO:0016922">
    <property type="term" value="F:nuclear receptor binding"/>
    <property type="evidence" value="ECO:0000353"/>
    <property type="project" value="UniProtKB"/>
</dbReference>
<dbReference type="GO" id="GO:0019904">
    <property type="term" value="F:protein domain specific binding"/>
    <property type="evidence" value="ECO:0000353"/>
    <property type="project" value="UniProtKB"/>
</dbReference>
<dbReference type="GO" id="GO:0003713">
    <property type="term" value="F:transcription coactivator activity"/>
    <property type="evidence" value="ECO:0000314"/>
    <property type="project" value="UniProtKB"/>
</dbReference>
<dbReference type="GO" id="GO:0006325">
    <property type="term" value="P:chromatin organization"/>
    <property type="evidence" value="ECO:0007669"/>
    <property type="project" value="Ensembl"/>
</dbReference>
<dbReference type="GO" id="GO:0030520">
    <property type="term" value="P:estrogen receptor signaling pathway"/>
    <property type="evidence" value="ECO:0000304"/>
    <property type="project" value="UniProtKB"/>
</dbReference>
<dbReference type="GO" id="GO:0000278">
    <property type="term" value="P:mitotic cell cycle"/>
    <property type="evidence" value="ECO:0007669"/>
    <property type="project" value="Ensembl"/>
</dbReference>
<dbReference type="GO" id="GO:0000122">
    <property type="term" value="P:negative regulation of transcription by RNA polymerase II"/>
    <property type="evidence" value="ECO:0000314"/>
    <property type="project" value="BHF-UCL"/>
</dbReference>
<dbReference type="GO" id="GO:0045893">
    <property type="term" value="P:positive regulation of DNA-templated transcription"/>
    <property type="evidence" value="ECO:0000314"/>
    <property type="project" value="UniProtKB"/>
</dbReference>
<dbReference type="GO" id="GO:0010628">
    <property type="term" value="P:positive regulation of gene expression"/>
    <property type="evidence" value="ECO:0000315"/>
    <property type="project" value="UniProtKB"/>
</dbReference>
<dbReference type="GO" id="GO:0051726">
    <property type="term" value="P:regulation of cell cycle"/>
    <property type="evidence" value="ECO:0000315"/>
    <property type="project" value="ComplexPortal"/>
</dbReference>
<dbReference type="GO" id="GO:0051302">
    <property type="term" value="P:regulation of cell division"/>
    <property type="evidence" value="ECO:0000314"/>
    <property type="project" value="ComplexPortal"/>
</dbReference>
<dbReference type="GO" id="GO:0006282">
    <property type="term" value="P:regulation of DNA repair"/>
    <property type="evidence" value="ECO:0000303"/>
    <property type="project" value="ComplexPortal"/>
</dbReference>
<dbReference type="GO" id="GO:0006355">
    <property type="term" value="P:regulation of DNA-templated transcription"/>
    <property type="evidence" value="ECO:0000315"/>
    <property type="project" value="ComplexPortal"/>
</dbReference>
<dbReference type="GO" id="GO:0045995">
    <property type="term" value="P:regulation of embryonic development"/>
    <property type="evidence" value="ECO:0000266"/>
    <property type="project" value="ComplexPortal"/>
</dbReference>
<dbReference type="GO" id="GO:0031647">
    <property type="term" value="P:regulation of protein stability"/>
    <property type="evidence" value="ECO:0007669"/>
    <property type="project" value="Ensembl"/>
</dbReference>
<dbReference type="GO" id="GO:0043484">
    <property type="term" value="P:regulation of RNA splicing"/>
    <property type="evidence" value="ECO:0000303"/>
    <property type="project" value="ComplexPortal"/>
</dbReference>
<dbReference type="GO" id="GO:0006357">
    <property type="term" value="P:regulation of transcription by RNA polymerase II"/>
    <property type="evidence" value="ECO:0000314"/>
    <property type="project" value="ComplexPortal"/>
</dbReference>
<dbReference type="InterPro" id="IPR019340">
    <property type="entry name" value="Histone_AcTrfase_su3"/>
</dbReference>
<dbReference type="PANTHER" id="PTHR13556:SF2">
    <property type="entry name" value="TRANSCRIPTIONAL ADAPTER 3"/>
    <property type="match status" value="1"/>
</dbReference>
<dbReference type="PANTHER" id="PTHR13556">
    <property type="entry name" value="TRANSCRIPTIONAL ADAPTER 3-RELATED"/>
    <property type="match status" value="1"/>
</dbReference>
<dbReference type="Pfam" id="PF10198">
    <property type="entry name" value="Ada3"/>
    <property type="match status" value="1"/>
</dbReference>